<evidence type="ECO:0000250" key="1">
    <source>
        <dbReference type="UniProtKB" id="P15436"/>
    </source>
</evidence>
<evidence type="ECO:0000250" key="2">
    <source>
        <dbReference type="UniProtKB" id="P28340"/>
    </source>
</evidence>
<evidence type="ECO:0000255" key="3"/>
<evidence type="ECO:0000256" key="4">
    <source>
        <dbReference type="SAM" id="MobiDB-lite"/>
    </source>
</evidence>
<evidence type="ECO:0000269" key="5">
    <source>
    </source>
</evidence>
<evidence type="ECO:0000269" key="6">
    <source>
    </source>
</evidence>
<evidence type="ECO:0000269" key="7">
    <source>
    </source>
</evidence>
<evidence type="ECO:0000269" key="8">
    <source>
    </source>
</evidence>
<evidence type="ECO:0000269" key="9">
    <source>
    </source>
</evidence>
<evidence type="ECO:0000303" key="10">
    <source>
    </source>
</evidence>
<evidence type="ECO:0000303" key="11">
    <source>
    </source>
</evidence>
<evidence type="ECO:0000305" key="12"/>
<evidence type="ECO:0000312" key="13">
    <source>
        <dbReference type="FlyBase" id="FBgn0263600"/>
    </source>
</evidence>
<name>DPOD1_DROME</name>
<protein>
    <recommendedName>
        <fullName evidence="12">DNA polymerase delta catalytic subunit</fullName>
        <ecNumber evidence="5 8 9">2.7.7.7</ecNumber>
    </recommendedName>
    <alternativeName>
        <fullName evidence="12">3'-5' exodeoxyribonuclease</fullName>
        <ecNumber evidence="5 8 9">3.1.11.-</ecNumber>
    </alternativeName>
</protein>
<sequence length="1092" mass="124905">MDGKRKFNGTSNGHAKKPRNPDDDEEMGFEAELAAFENSEDMDQTLLMGDGPENQTTSERWSRPPPPELDPSKHNLEFQQLDVENYLGQPLPGMPGAQIGPVPVVRMFGVTMEGNSVCCHVHGFCPYFYIEAPSQFEEHHCEKLQKALDQKVIADIRNNKDNVQEAVLMVELVEKLNIHGYNGDKKQRYIKISVTLPRFVAAASRLLKKEVIMSEIDFQDCRAFENNIDFDIRFMVDTDVVGCNWIELPMGHWRIRNSHSKPLPESRCQIEVDVAFDRFISHEPEGEWSKVAPFRILSFDIECAGRKGIFPEAKIDPVIQIANMVIRQGEREPFIRNVFTLNECAPIIGSQVLCHDKETQMLDKWSAFVREVDPDILTGYNINNFDFPYLLNRAAHLKVRNFEYLGRIKNIRSVIKEQMLQSKQMGRRENQYVNFEGRVPFDLLFVLLRDYKLRSYTLNAVSYHFLQEQKEDVHHSIITDLQNGDEQTRRRLAMYCLKDAYLPLRLLEKLMAIVNYMEMARVTGVPLESLLTRGQQIKVLSQLLRKAKTKGFIMPSYTSQGSDEQYEGATVIEPKRGYYADPISTLDFASLYPSIMMAHNLCYTTLVLGGTREKLRQQENLQDDQVERTPANNYFVKSEVRRGLLPEILESLLAARKRAKNDLKVETDPFKRKVLDGRQLALKISANSVYGFTGAQVGKLPCLEISGSVTAYGRTMIEMTKNEVESHYTQANGYENNAVVIYGDTDSVMVNFGVKTLERSMELGREAAELVSSKFVHPIKLEFEKVYYPYLLINKKRYAGLYFTRPDTYDKMDCKGIETVRRDNSPLVANLMNSCLQKLLIERDPDGAVAYVKQVIADLLCNRIDISHLVITKELAKTDYAAKQAHVELAAKMKKRDPGTAPKLGDRVPYVICAAAKNTPAYQKAEDPLYVLENSVPIDATYYLEQQLSKPLLRIFEPILGDNAESILLKGEHTRTRTVVTSKVGGLAGFMTKKTSCLGCKSLMPKGYEQACLCPHCEPRMSELYQKEVGAKRELEETFSRLWTECQRCQESLHEEVICSNRDCPIFYMRQKVRMDLDNQEKRVLRFGLAEW</sequence>
<reference key="1">
    <citation type="journal article" date="1995" name="Gene">
        <title>Isolation and sequence determination of the cDNA encoding DNA polymerase delta from Drosophila melanogaster.</title>
        <authorList>
            <person name="Chiang C.S."/>
            <person name="Lehman I.R."/>
        </authorList>
    </citation>
    <scope>NUCLEOTIDE SEQUENCE [MRNA]</scope>
</reference>
<reference key="2">
    <citation type="journal article" date="2000" name="Science">
        <title>The genome sequence of Drosophila melanogaster.</title>
        <authorList>
            <person name="Adams M.D."/>
            <person name="Celniker S.E."/>
            <person name="Holt R.A."/>
            <person name="Evans C.A."/>
            <person name="Gocayne J.D."/>
            <person name="Amanatides P.G."/>
            <person name="Scherer S.E."/>
            <person name="Li P.W."/>
            <person name="Hoskins R.A."/>
            <person name="Galle R.F."/>
            <person name="George R.A."/>
            <person name="Lewis S.E."/>
            <person name="Richards S."/>
            <person name="Ashburner M."/>
            <person name="Henderson S.N."/>
            <person name="Sutton G.G."/>
            <person name="Wortman J.R."/>
            <person name="Yandell M.D."/>
            <person name="Zhang Q."/>
            <person name="Chen L.X."/>
            <person name="Brandon R.C."/>
            <person name="Rogers Y.-H.C."/>
            <person name="Blazej R.G."/>
            <person name="Champe M."/>
            <person name="Pfeiffer B.D."/>
            <person name="Wan K.H."/>
            <person name="Doyle C."/>
            <person name="Baxter E.G."/>
            <person name="Helt G."/>
            <person name="Nelson C.R."/>
            <person name="Miklos G.L.G."/>
            <person name="Abril J.F."/>
            <person name="Agbayani A."/>
            <person name="An H.-J."/>
            <person name="Andrews-Pfannkoch C."/>
            <person name="Baldwin D."/>
            <person name="Ballew R.M."/>
            <person name="Basu A."/>
            <person name="Baxendale J."/>
            <person name="Bayraktaroglu L."/>
            <person name="Beasley E.M."/>
            <person name="Beeson K.Y."/>
            <person name="Benos P.V."/>
            <person name="Berman B.P."/>
            <person name="Bhandari D."/>
            <person name="Bolshakov S."/>
            <person name="Borkova D."/>
            <person name="Botchan M.R."/>
            <person name="Bouck J."/>
            <person name="Brokstein P."/>
            <person name="Brottier P."/>
            <person name="Burtis K.C."/>
            <person name="Busam D.A."/>
            <person name="Butler H."/>
            <person name="Cadieu E."/>
            <person name="Center A."/>
            <person name="Chandra I."/>
            <person name="Cherry J.M."/>
            <person name="Cawley S."/>
            <person name="Dahlke C."/>
            <person name="Davenport L.B."/>
            <person name="Davies P."/>
            <person name="de Pablos B."/>
            <person name="Delcher A."/>
            <person name="Deng Z."/>
            <person name="Mays A.D."/>
            <person name="Dew I."/>
            <person name="Dietz S.M."/>
            <person name="Dodson K."/>
            <person name="Doup L.E."/>
            <person name="Downes M."/>
            <person name="Dugan-Rocha S."/>
            <person name="Dunkov B.C."/>
            <person name="Dunn P."/>
            <person name="Durbin K.J."/>
            <person name="Evangelista C.C."/>
            <person name="Ferraz C."/>
            <person name="Ferriera S."/>
            <person name="Fleischmann W."/>
            <person name="Fosler C."/>
            <person name="Gabrielian A.E."/>
            <person name="Garg N.S."/>
            <person name="Gelbart W.M."/>
            <person name="Glasser K."/>
            <person name="Glodek A."/>
            <person name="Gong F."/>
            <person name="Gorrell J.H."/>
            <person name="Gu Z."/>
            <person name="Guan P."/>
            <person name="Harris M."/>
            <person name="Harris N.L."/>
            <person name="Harvey D.A."/>
            <person name="Heiman T.J."/>
            <person name="Hernandez J.R."/>
            <person name="Houck J."/>
            <person name="Hostin D."/>
            <person name="Houston K.A."/>
            <person name="Howland T.J."/>
            <person name="Wei M.-H."/>
            <person name="Ibegwam C."/>
            <person name="Jalali M."/>
            <person name="Kalush F."/>
            <person name="Karpen G.H."/>
            <person name="Ke Z."/>
            <person name="Kennison J.A."/>
            <person name="Ketchum K.A."/>
            <person name="Kimmel B.E."/>
            <person name="Kodira C.D."/>
            <person name="Kraft C.L."/>
            <person name="Kravitz S."/>
            <person name="Kulp D."/>
            <person name="Lai Z."/>
            <person name="Lasko P."/>
            <person name="Lei Y."/>
            <person name="Levitsky A.A."/>
            <person name="Li J.H."/>
            <person name="Li Z."/>
            <person name="Liang Y."/>
            <person name="Lin X."/>
            <person name="Liu X."/>
            <person name="Mattei B."/>
            <person name="McIntosh T.C."/>
            <person name="McLeod M.P."/>
            <person name="McPherson D."/>
            <person name="Merkulov G."/>
            <person name="Milshina N.V."/>
            <person name="Mobarry C."/>
            <person name="Morris J."/>
            <person name="Moshrefi A."/>
            <person name="Mount S.M."/>
            <person name="Moy M."/>
            <person name="Murphy B."/>
            <person name="Murphy L."/>
            <person name="Muzny D.M."/>
            <person name="Nelson D.L."/>
            <person name="Nelson D.R."/>
            <person name="Nelson K.A."/>
            <person name="Nixon K."/>
            <person name="Nusskern D.R."/>
            <person name="Pacleb J.M."/>
            <person name="Palazzolo M."/>
            <person name="Pittman G.S."/>
            <person name="Pan S."/>
            <person name="Pollard J."/>
            <person name="Puri V."/>
            <person name="Reese M.G."/>
            <person name="Reinert K."/>
            <person name="Remington K."/>
            <person name="Saunders R.D.C."/>
            <person name="Scheeler F."/>
            <person name="Shen H."/>
            <person name="Shue B.C."/>
            <person name="Siden-Kiamos I."/>
            <person name="Simpson M."/>
            <person name="Skupski M.P."/>
            <person name="Smith T.J."/>
            <person name="Spier E."/>
            <person name="Spradling A.C."/>
            <person name="Stapleton M."/>
            <person name="Strong R."/>
            <person name="Sun E."/>
            <person name="Svirskas R."/>
            <person name="Tector C."/>
            <person name="Turner R."/>
            <person name="Venter E."/>
            <person name="Wang A.H."/>
            <person name="Wang X."/>
            <person name="Wang Z.-Y."/>
            <person name="Wassarman D.A."/>
            <person name="Weinstock G.M."/>
            <person name="Weissenbach J."/>
            <person name="Williams S.M."/>
            <person name="Woodage T."/>
            <person name="Worley K.C."/>
            <person name="Wu D."/>
            <person name="Yang S."/>
            <person name="Yao Q.A."/>
            <person name="Ye J."/>
            <person name="Yeh R.-F."/>
            <person name="Zaveri J.S."/>
            <person name="Zhan M."/>
            <person name="Zhang G."/>
            <person name="Zhao Q."/>
            <person name="Zheng L."/>
            <person name="Zheng X.H."/>
            <person name="Zhong F.N."/>
            <person name="Zhong W."/>
            <person name="Zhou X."/>
            <person name="Zhu S.C."/>
            <person name="Zhu X."/>
            <person name="Smith H.O."/>
            <person name="Gibbs R.A."/>
            <person name="Myers E.W."/>
            <person name="Rubin G.M."/>
            <person name="Venter J.C."/>
        </authorList>
    </citation>
    <scope>NUCLEOTIDE SEQUENCE [LARGE SCALE GENOMIC DNA]</scope>
    <source>
        <strain>Berkeley</strain>
    </source>
</reference>
<reference key="3">
    <citation type="journal article" date="2002" name="Genome Biol.">
        <title>Annotation of the Drosophila melanogaster euchromatic genome: a systematic review.</title>
        <authorList>
            <person name="Misra S."/>
            <person name="Crosby M.A."/>
            <person name="Mungall C.J."/>
            <person name="Matthews B.B."/>
            <person name="Campbell K.S."/>
            <person name="Hradecky P."/>
            <person name="Huang Y."/>
            <person name="Kaminker J.S."/>
            <person name="Millburn G.H."/>
            <person name="Prochnik S.E."/>
            <person name="Smith C.D."/>
            <person name="Tupy J.L."/>
            <person name="Whitfield E.J."/>
            <person name="Bayraktaroglu L."/>
            <person name="Berman B.P."/>
            <person name="Bettencourt B.R."/>
            <person name="Celniker S.E."/>
            <person name="de Grey A.D.N.J."/>
            <person name="Drysdale R.A."/>
            <person name="Harris N.L."/>
            <person name="Richter J."/>
            <person name="Russo S."/>
            <person name="Schroeder A.J."/>
            <person name="Shu S.Q."/>
            <person name="Stapleton M."/>
            <person name="Yamada C."/>
            <person name="Ashburner M."/>
            <person name="Gelbart W.M."/>
            <person name="Rubin G.M."/>
            <person name="Lewis S.E."/>
        </authorList>
    </citation>
    <scope>GENOME REANNOTATION</scope>
    <source>
        <strain>Berkeley</strain>
    </source>
</reference>
<reference key="4">
    <citation type="journal article" date="2002" name="Genome Biol.">
        <title>A Drosophila full-length cDNA resource.</title>
        <authorList>
            <person name="Stapleton M."/>
            <person name="Carlson J.W."/>
            <person name="Brokstein P."/>
            <person name="Yu C."/>
            <person name="Champe M."/>
            <person name="George R.A."/>
            <person name="Guarin H."/>
            <person name="Kronmiller B."/>
            <person name="Pacleb J.M."/>
            <person name="Park S."/>
            <person name="Wan K.H."/>
            <person name="Rubin G.M."/>
            <person name="Celniker S.E."/>
        </authorList>
    </citation>
    <scope>NUCLEOTIDE SEQUENCE [LARGE SCALE MRNA]</scope>
    <source>
        <strain>Berkeley</strain>
        <tissue>Embryo</tissue>
    </source>
</reference>
<reference key="5">
    <citation type="journal article" date="1992" name="Nucleic Acids Res.">
        <title>Delta-type DNA polymerase characterized from Drosophila melanogaster embryos.</title>
        <authorList>
            <person name="Peck V.M."/>
            <person name="Gerner E.W."/>
            <person name="Cress A.E."/>
        </authorList>
    </citation>
    <scope>FUNCTION</scope>
    <scope>CATALYTIC ACTIVITY</scope>
    <scope>ACTIVITY REGULATION</scope>
    <scope>TISSUE SPECIFICITY</scope>
</reference>
<reference key="6">
    <citation type="journal article" date="1993" name="Proc. Natl. Acad. Sci. U.S.A.">
        <title>DNA polymerase delta from embryos of Drosophila melanogaster.</title>
        <authorList>
            <person name="Chiang C.S."/>
            <person name="Mitsis P.G."/>
            <person name="Lehman I.R."/>
        </authorList>
    </citation>
    <scope>FUNCTION</scope>
    <scope>CATALYTIC ACTIVITY</scope>
    <scope>COFACTOR</scope>
    <scope>ACTIVITY REGULATION</scope>
    <scope>TISSUE SPECIFICITY</scope>
</reference>
<reference key="7">
    <citation type="journal article" date="1994" name="J. Biol. Chem.">
        <title>Drosophila DNA polymerase delta. Purification and characterization.</title>
        <authorList>
            <person name="Aoyagi N."/>
            <person name="Matsuoka S."/>
            <person name="Furunobu A."/>
            <person name="Matsukage A."/>
            <person name="Sakaguchi K."/>
        </authorList>
    </citation>
    <scope>FUNCTION</scope>
    <scope>CATALYTIC ACTIVITY</scope>
    <scope>COFACTOR</scope>
    <scope>ACTIVITY REGULATION</scope>
    <scope>BIOPHYSICOCHEMICAL PROPERTIES</scope>
    <scope>TISSUE SPECIFICITY</scope>
</reference>
<reference key="8">
    <citation type="journal article" date="2006" name="FEBS J.">
        <title>Characterization of a second proliferating cell nuclear antigen (PCNA2) from Drosophila melanogaster.</title>
        <authorList>
            <person name="Ruike T."/>
            <person name="Takeuchi R."/>
            <person name="Takata K."/>
            <person name="Oshige M."/>
            <person name="Kasai N."/>
            <person name="Shimanouchi K."/>
            <person name="Kanai Y."/>
            <person name="Nakamura R."/>
            <person name="Sugawara F."/>
            <person name="Sakaguchi K."/>
        </authorList>
    </citation>
    <scope>INTERACTION WITH PCNA AND PCNA2</scope>
</reference>
<reference key="9">
    <citation type="journal article" date="2019" name="PLoS Genet.">
        <title>The processivity factor Pol32 mediates nuclear localization of DNA polymerase delta and prevents chromosomal fragile site formation in Drosophila development.</title>
        <authorList>
            <person name="Ji J."/>
            <person name="Tang X."/>
            <person name="Hu W."/>
            <person name="Maggert K.A."/>
            <person name="Rong Y.S."/>
        </authorList>
    </citation>
    <scope>FUNCTION</scope>
    <scope>IDENTIFICATION IN THE DNA POLYMERASE DELTA COMPLEX</scope>
    <scope>SUBCELLULAR LOCATION</scope>
    <scope>TISSUE SPECIFICITY</scope>
</reference>
<proteinExistence type="evidence at protein level"/>
<gene>
    <name evidence="13" type="primary">PolD1</name>
    <name evidence="11" type="synonym">DNApol-delta</name>
    <name evidence="12" type="synonym">DNApolD1</name>
    <name evidence="10" type="synonym">PolD</name>
    <name evidence="13" type="ORF">CG5949</name>
</gene>
<keyword id="KW-0004">4Fe-4S</keyword>
<keyword id="KW-0235">DNA replication</keyword>
<keyword id="KW-0238">DNA-binding</keyword>
<keyword id="KW-0239">DNA-directed DNA polymerase</keyword>
<keyword id="KW-0269">Exonuclease</keyword>
<keyword id="KW-0378">Hydrolase</keyword>
<keyword id="KW-0408">Iron</keyword>
<keyword id="KW-0411">Iron-sulfur</keyword>
<keyword id="KW-0479">Metal-binding</keyword>
<keyword id="KW-0540">Nuclease</keyword>
<keyword id="KW-0548">Nucleotidyltransferase</keyword>
<keyword id="KW-0539">Nucleus</keyword>
<keyword id="KW-1185">Reference proteome</keyword>
<keyword id="KW-0808">Transferase</keyword>
<keyword id="KW-0862">Zinc</keyword>
<keyword id="KW-0863">Zinc-finger</keyword>
<accession>P54358</accession>
<accession>Q9VUW8</accession>
<organism>
    <name type="scientific">Drosophila melanogaster</name>
    <name type="common">Fruit fly</name>
    <dbReference type="NCBI Taxonomy" id="7227"/>
    <lineage>
        <taxon>Eukaryota</taxon>
        <taxon>Metazoa</taxon>
        <taxon>Ecdysozoa</taxon>
        <taxon>Arthropoda</taxon>
        <taxon>Hexapoda</taxon>
        <taxon>Insecta</taxon>
        <taxon>Pterygota</taxon>
        <taxon>Neoptera</taxon>
        <taxon>Endopterygota</taxon>
        <taxon>Diptera</taxon>
        <taxon>Brachycera</taxon>
        <taxon>Muscomorpha</taxon>
        <taxon>Ephydroidea</taxon>
        <taxon>Drosophilidae</taxon>
        <taxon>Drosophila</taxon>
        <taxon>Sophophora</taxon>
    </lineage>
</organism>
<feature type="chain" id="PRO_0000046447" description="DNA polymerase delta catalytic subunit">
    <location>
        <begin position="1"/>
        <end position="1092"/>
    </location>
</feature>
<feature type="zinc finger region" description="CysA-type" evidence="1">
    <location>
        <begin position="997"/>
        <end position="1017"/>
    </location>
</feature>
<feature type="region of interest" description="Disordered" evidence="4">
    <location>
        <begin position="1"/>
        <end position="71"/>
    </location>
</feature>
<feature type="short sequence motif" description="Nuclear localization signal" evidence="3">
    <location>
        <begin position="4"/>
        <end position="19"/>
    </location>
</feature>
<feature type="short sequence motif" description="CysB motif" evidence="1">
    <location>
        <begin position="1046"/>
        <end position="1064"/>
    </location>
</feature>
<feature type="binding site" evidence="1">
    <location>
        <position position="997"/>
    </location>
    <ligand>
        <name>Zn(2+)</name>
        <dbReference type="ChEBI" id="CHEBI:29105"/>
    </ligand>
</feature>
<feature type="binding site" evidence="1">
    <location>
        <position position="1000"/>
    </location>
    <ligand>
        <name>Zn(2+)</name>
        <dbReference type="ChEBI" id="CHEBI:29105"/>
    </ligand>
</feature>
<feature type="binding site" evidence="1">
    <location>
        <position position="1014"/>
    </location>
    <ligand>
        <name>Zn(2+)</name>
        <dbReference type="ChEBI" id="CHEBI:29105"/>
    </ligand>
</feature>
<feature type="binding site" evidence="1">
    <location>
        <position position="1017"/>
    </location>
    <ligand>
        <name>Zn(2+)</name>
        <dbReference type="ChEBI" id="CHEBI:29105"/>
    </ligand>
</feature>
<feature type="binding site" evidence="1">
    <location>
        <position position="1046"/>
    </location>
    <ligand>
        <name>[4Fe-4S] cluster</name>
        <dbReference type="ChEBI" id="CHEBI:49883"/>
    </ligand>
</feature>
<feature type="binding site" evidence="1">
    <location>
        <position position="1049"/>
    </location>
    <ligand>
        <name>[4Fe-4S] cluster</name>
        <dbReference type="ChEBI" id="CHEBI:49883"/>
    </ligand>
</feature>
<feature type="binding site" evidence="1">
    <location>
        <position position="1059"/>
    </location>
    <ligand>
        <name>[4Fe-4S] cluster</name>
        <dbReference type="ChEBI" id="CHEBI:49883"/>
    </ligand>
</feature>
<feature type="binding site" evidence="1">
    <location>
        <position position="1064"/>
    </location>
    <ligand>
        <name>[4Fe-4S] cluster</name>
        <dbReference type="ChEBI" id="CHEBI:49883"/>
    </ligand>
</feature>
<feature type="sequence conflict" description="In Ref. 1; CAA61369." evidence="12" ref="1">
    <original>L</original>
    <variation>S</variation>
    <location>
        <position position="492"/>
    </location>
</feature>
<dbReference type="EC" id="2.7.7.7" evidence="5 8 9"/>
<dbReference type="EC" id="3.1.11.-" evidence="5 8 9"/>
<dbReference type="EMBL" id="X88928">
    <property type="protein sequence ID" value="CAA61369.1"/>
    <property type="molecule type" value="mRNA"/>
</dbReference>
<dbReference type="EMBL" id="AE014296">
    <property type="protein sequence ID" value="AAF49555.1"/>
    <property type="molecule type" value="Genomic_DNA"/>
</dbReference>
<dbReference type="EMBL" id="AY113526">
    <property type="protein sequence ID" value="AAM29531.1"/>
    <property type="molecule type" value="mRNA"/>
</dbReference>
<dbReference type="RefSeq" id="NP_524099.2">
    <property type="nucleotide sequence ID" value="NM_079375.3"/>
</dbReference>
<dbReference type="SMR" id="P54358"/>
<dbReference type="BioGRID" id="65057">
    <property type="interactions" value="15"/>
</dbReference>
<dbReference type="ComplexPortal" id="CPX-2421">
    <property type="entry name" value="DNA polymerase delta complex"/>
</dbReference>
<dbReference type="DIP" id="DIP-22360N"/>
<dbReference type="FunCoup" id="P54358">
    <property type="interactions" value="1605"/>
</dbReference>
<dbReference type="IntAct" id="P54358">
    <property type="interactions" value="8"/>
</dbReference>
<dbReference type="STRING" id="7227.FBpp0075277"/>
<dbReference type="BindingDB" id="P54358"/>
<dbReference type="ChEMBL" id="CHEMBL3124738"/>
<dbReference type="PaxDb" id="7227-FBpp0075277"/>
<dbReference type="EnsemblMetazoa" id="FBtr0075522">
    <property type="protein sequence ID" value="FBpp0075277"/>
    <property type="gene ID" value="FBgn0263600"/>
</dbReference>
<dbReference type="GeneID" id="39746"/>
<dbReference type="KEGG" id="dme:Dmel_CG5949"/>
<dbReference type="AGR" id="FB:FBgn0263600"/>
<dbReference type="CTD" id="5424"/>
<dbReference type="FlyBase" id="FBgn0263600">
    <property type="gene designation" value="PolD1"/>
</dbReference>
<dbReference type="VEuPathDB" id="VectorBase:FBgn0263600"/>
<dbReference type="eggNOG" id="KOG0969">
    <property type="taxonomic scope" value="Eukaryota"/>
</dbReference>
<dbReference type="GeneTree" id="ENSGT00560000077365"/>
<dbReference type="HOGENOM" id="CLU_000203_2_0_1"/>
<dbReference type="InParanoid" id="P54358"/>
<dbReference type="OMA" id="CNNCRPR"/>
<dbReference type="OrthoDB" id="2414538at2759"/>
<dbReference type="PhylomeDB" id="P54358"/>
<dbReference type="Reactome" id="R-DME-69166">
    <property type="pathway name" value="Removal of the Flap Intermediate"/>
</dbReference>
<dbReference type="Reactome" id="R-DME-69183">
    <property type="pathway name" value="Processive synthesis on the lagging strand"/>
</dbReference>
<dbReference type="BioGRID-ORCS" id="39746">
    <property type="hits" value="0 hits in 1 CRISPR screen"/>
</dbReference>
<dbReference type="GenomeRNAi" id="39746"/>
<dbReference type="PRO" id="PR:P54358"/>
<dbReference type="Proteomes" id="UP000000803">
    <property type="component" value="Chromosome 3L"/>
</dbReference>
<dbReference type="Bgee" id="FBgn0263600">
    <property type="expression patterns" value="Expressed in secondary oocyte and 50 other cell types or tissues"/>
</dbReference>
<dbReference type="GO" id="GO:0043625">
    <property type="term" value="C:delta DNA polymerase complex"/>
    <property type="evidence" value="ECO:0000314"/>
    <property type="project" value="FlyBase"/>
</dbReference>
<dbReference type="GO" id="GO:0005654">
    <property type="term" value="C:nucleoplasm"/>
    <property type="evidence" value="ECO:0000314"/>
    <property type="project" value="UniProtKB"/>
</dbReference>
<dbReference type="GO" id="GO:0005634">
    <property type="term" value="C:nucleus"/>
    <property type="evidence" value="ECO:0000314"/>
    <property type="project" value="FlyBase"/>
</dbReference>
<dbReference type="GO" id="GO:0008296">
    <property type="term" value="F:3'-5'-DNA exonuclease activity"/>
    <property type="evidence" value="ECO:0000314"/>
    <property type="project" value="FlyBase"/>
</dbReference>
<dbReference type="GO" id="GO:0051539">
    <property type="term" value="F:4 iron, 4 sulfur cluster binding"/>
    <property type="evidence" value="ECO:0007669"/>
    <property type="project" value="UniProtKB-KW"/>
</dbReference>
<dbReference type="GO" id="GO:0003677">
    <property type="term" value="F:DNA binding"/>
    <property type="evidence" value="ECO:0007669"/>
    <property type="project" value="UniProtKB-KW"/>
</dbReference>
<dbReference type="GO" id="GO:0003887">
    <property type="term" value="F:DNA-directed DNA polymerase activity"/>
    <property type="evidence" value="ECO:0000314"/>
    <property type="project" value="FlyBase"/>
</dbReference>
<dbReference type="GO" id="GO:0000166">
    <property type="term" value="F:nucleotide binding"/>
    <property type="evidence" value="ECO:0007669"/>
    <property type="project" value="InterPro"/>
</dbReference>
<dbReference type="GO" id="GO:0008270">
    <property type="term" value="F:zinc ion binding"/>
    <property type="evidence" value="ECO:0007669"/>
    <property type="project" value="UniProtKB-KW"/>
</dbReference>
<dbReference type="GO" id="GO:0006287">
    <property type="term" value="P:base-excision repair, gap-filling"/>
    <property type="evidence" value="ECO:0000318"/>
    <property type="project" value="GO_Central"/>
</dbReference>
<dbReference type="GO" id="GO:0045004">
    <property type="term" value="P:DNA replication proofreading"/>
    <property type="evidence" value="ECO:0000314"/>
    <property type="project" value="FlyBase"/>
</dbReference>
<dbReference type="GO" id="GO:0006261">
    <property type="term" value="P:DNA-templated DNA replication"/>
    <property type="evidence" value="ECO:0000314"/>
    <property type="project" value="FlyBase"/>
</dbReference>
<dbReference type="GO" id="GO:0006297">
    <property type="term" value="P:nucleotide-excision repair, DNA gap filling"/>
    <property type="evidence" value="ECO:0000318"/>
    <property type="project" value="GO_Central"/>
</dbReference>
<dbReference type="CDD" id="cd05777">
    <property type="entry name" value="DNA_polB_delta_exo"/>
    <property type="match status" value="1"/>
</dbReference>
<dbReference type="CDD" id="cd05533">
    <property type="entry name" value="POLBc_delta"/>
    <property type="match status" value="1"/>
</dbReference>
<dbReference type="FunFam" id="1.10.132.60:FF:000001">
    <property type="entry name" value="DNA polymerase"/>
    <property type="match status" value="1"/>
</dbReference>
<dbReference type="FunFam" id="1.10.287.690:FF:000001">
    <property type="entry name" value="DNA polymerase"/>
    <property type="match status" value="1"/>
</dbReference>
<dbReference type="FunFam" id="2.40.50.730:FF:000005">
    <property type="entry name" value="DNA polymerase"/>
    <property type="match status" value="1"/>
</dbReference>
<dbReference type="FunFam" id="2.40.50.730:FF:000007">
    <property type="entry name" value="DNA polymerase"/>
    <property type="match status" value="1"/>
</dbReference>
<dbReference type="FunFam" id="3.30.342.10:FF:000003">
    <property type="entry name" value="DNA polymerase"/>
    <property type="match status" value="1"/>
</dbReference>
<dbReference type="FunFam" id="3.30.420.10:FF:000351">
    <property type="entry name" value="DNA polymerase"/>
    <property type="match status" value="1"/>
</dbReference>
<dbReference type="Gene3D" id="2.40.50.730">
    <property type="match status" value="2"/>
</dbReference>
<dbReference type="Gene3D" id="1.10.132.60">
    <property type="entry name" value="DNA polymerase family B, C-terminal domain"/>
    <property type="match status" value="1"/>
</dbReference>
<dbReference type="Gene3D" id="1.10.287.690">
    <property type="entry name" value="Helix hairpin bin"/>
    <property type="match status" value="1"/>
</dbReference>
<dbReference type="Gene3D" id="3.90.1600.10">
    <property type="entry name" value="Palm domain of DNA polymerase"/>
    <property type="match status" value="1"/>
</dbReference>
<dbReference type="Gene3D" id="3.30.420.10">
    <property type="entry name" value="Ribonuclease H-like superfamily/Ribonuclease H"/>
    <property type="match status" value="1"/>
</dbReference>
<dbReference type="InterPro" id="IPR006172">
    <property type="entry name" value="DNA-dir_DNA_pol_B"/>
</dbReference>
<dbReference type="InterPro" id="IPR017964">
    <property type="entry name" value="DNA-dir_DNA_pol_B_CS"/>
</dbReference>
<dbReference type="InterPro" id="IPR006133">
    <property type="entry name" value="DNA-dir_DNA_pol_B_exonuc"/>
</dbReference>
<dbReference type="InterPro" id="IPR006134">
    <property type="entry name" value="DNA-dir_DNA_pol_B_multi_dom"/>
</dbReference>
<dbReference type="InterPro" id="IPR043502">
    <property type="entry name" value="DNA/RNA_pol_sf"/>
</dbReference>
<dbReference type="InterPro" id="IPR042087">
    <property type="entry name" value="DNA_pol_B_thumb"/>
</dbReference>
<dbReference type="InterPro" id="IPR023211">
    <property type="entry name" value="DNA_pol_palm_dom_sf"/>
</dbReference>
<dbReference type="InterPro" id="IPR050240">
    <property type="entry name" value="DNA_pol_type-B"/>
</dbReference>
<dbReference type="InterPro" id="IPR056435">
    <property type="entry name" value="DPOD/Z_N"/>
</dbReference>
<dbReference type="InterPro" id="IPR012337">
    <property type="entry name" value="RNaseH-like_sf"/>
</dbReference>
<dbReference type="InterPro" id="IPR036397">
    <property type="entry name" value="RNaseH_sf"/>
</dbReference>
<dbReference type="InterPro" id="IPR025687">
    <property type="entry name" value="Znf-C4pol"/>
</dbReference>
<dbReference type="NCBIfam" id="TIGR00592">
    <property type="entry name" value="pol2"/>
    <property type="match status" value="1"/>
</dbReference>
<dbReference type="PANTHER" id="PTHR10322">
    <property type="entry name" value="DNA POLYMERASE CATALYTIC SUBUNIT"/>
    <property type="match status" value="1"/>
</dbReference>
<dbReference type="PANTHER" id="PTHR10322:SF23">
    <property type="entry name" value="DNA POLYMERASE DELTA CATALYTIC SUBUNIT"/>
    <property type="match status" value="1"/>
</dbReference>
<dbReference type="Pfam" id="PF00136">
    <property type="entry name" value="DNA_pol_B"/>
    <property type="match status" value="1"/>
</dbReference>
<dbReference type="Pfam" id="PF03104">
    <property type="entry name" value="DNA_pol_B_exo1"/>
    <property type="match status" value="1"/>
</dbReference>
<dbReference type="Pfam" id="PF24055">
    <property type="entry name" value="POL3_N"/>
    <property type="match status" value="1"/>
</dbReference>
<dbReference type="Pfam" id="PF14260">
    <property type="entry name" value="zf-C4pol"/>
    <property type="match status" value="1"/>
</dbReference>
<dbReference type="PRINTS" id="PR00106">
    <property type="entry name" value="DNAPOLB"/>
</dbReference>
<dbReference type="SMART" id="SM00486">
    <property type="entry name" value="POLBc"/>
    <property type="match status" value="1"/>
</dbReference>
<dbReference type="SUPFAM" id="SSF56672">
    <property type="entry name" value="DNA/RNA polymerases"/>
    <property type="match status" value="1"/>
</dbReference>
<dbReference type="SUPFAM" id="SSF53098">
    <property type="entry name" value="Ribonuclease H-like"/>
    <property type="match status" value="1"/>
</dbReference>
<dbReference type="PROSITE" id="PS00116">
    <property type="entry name" value="DNA_POLYMERASE_B"/>
    <property type="match status" value="1"/>
</dbReference>
<comment type="function">
    <text evidence="2 5 7 8 9">As the catalytic component of the DNA polymerase delta complex, plays a crucial role in high fidelity genome replication, including lagging strand synthesis, DNA recombination and repair (By similarity). Exhibits both DNA polymerase and 3'- to 5'-exonuclease activities (PubMed:1360647, PubMed:7907087, PubMed:8415662). Required at the nucleus of rapidly dividing embryonic cells to activate genome replication during the earliest cell cycles (PubMed:31100062). Likely to require the presence of accessory proteins PolD2 and PolD3 for full activity (PubMed:31100062).</text>
</comment>
<comment type="catalytic activity">
    <reaction evidence="5 8 9">
        <text>DNA(n) + a 2'-deoxyribonucleoside 5'-triphosphate = DNA(n+1) + diphosphate</text>
        <dbReference type="Rhea" id="RHEA:22508"/>
        <dbReference type="Rhea" id="RHEA-COMP:17339"/>
        <dbReference type="Rhea" id="RHEA-COMP:17340"/>
        <dbReference type="ChEBI" id="CHEBI:33019"/>
        <dbReference type="ChEBI" id="CHEBI:61560"/>
        <dbReference type="ChEBI" id="CHEBI:173112"/>
        <dbReference type="EC" id="2.7.7.7"/>
    </reaction>
</comment>
<comment type="cofactor">
    <cofactor evidence="1">
        <name>[4Fe-4S] cluster</name>
        <dbReference type="ChEBI" id="CHEBI:49883"/>
    </cofactor>
    <text evidence="1">Binds 1 [4Fe-4S] cluster.</text>
</comment>
<comment type="cofactor">
    <cofactor evidence="8 9">
        <name>Mg(2+)</name>
        <dbReference type="ChEBI" id="CHEBI:18420"/>
    </cofactor>
</comment>
<comment type="activity regulation">
    <text evidence="5 8 9">Inhibited by KCL (PubMed:1360647, PubMed:7907087). Also inhibited by carbonyldiphosphonate, aphidicolin and N-ethylmaleimide (NEM) (PubMed:1360647, PubMed:7907087, PubMed:8415662).</text>
</comment>
<comment type="biophysicochemical properties">
    <phDependence>
        <text evidence="8">Optimum pH is 7.2.</text>
    </phDependence>
</comment>
<comment type="subunit">
    <text evidence="6 7">Catalytic component of the DNA polymerase delta complex consisting of three subunits: the catalytic subunit PolD1 and two accessory subunits PolD2/Pol31 and PolD3/Pol32 (PubMed:31100062). Within the delta complex, interacts with both PolD2 and PolD3, and is able to interact with PolD2 in the absence of PolD3 (PubMed:31100062). Interacts with PCNA and PCNA2 (PubMed:17087725).</text>
</comment>
<comment type="subcellular location">
    <subcellularLocation>
        <location evidence="7">Nucleus</location>
    </subcellularLocation>
    <subcellularLocation>
        <location evidence="7">Nucleus</location>
        <location evidence="7">Nucleoplasm</location>
    </subcellularLocation>
    <text evidence="7">In embryos, accumulates in the nucleus during interphase but disperses into the nucleoplasm at the onset of mitosis.</text>
</comment>
<comment type="tissue specificity">
    <text evidence="5 7 8 9">Expressed in ovaries (at the protein level) (PubMed:31100062). Expressed in embryos (at the protein level) (PubMed:1360647, PubMed:31100062, PubMed:7907087, PubMed:8415662).</text>
</comment>
<comment type="domain">
    <text evidence="1">The CysB motif binds 1 4Fe-4S cluster and is required for the formation of polymerase complexes.</text>
</comment>
<comment type="miscellaneous">
    <text>In eukaryotes there are five DNA polymerases: alpha, beta, gamma, delta, and epsilon which are responsible for different reactions of DNA synthesis.</text>
</comment>
<comment type="similarity">
    <text evidence="12">Belongs to the DNA polymerase type-B family.</text>
</comment>